<keyword id="KW-0067">ATP-binding</keyword>
<keyword id="KW-0547">Nucleotide-binding</keyword>
<keyword id="KW-0808">Transferase</keyword>
<sequence length="292" mass="31644">MSMPATSTKTTKLATSLIDEYALLGWRAMLTEVNLSPKPGLVDRINCGAHKDMALEDFHRSALAIQGWLPRFIEFGACSAEMAPEAVLHGLRPIGMACEGDMFRATAGVNTHKGSIFSLGLLCAAIGRLLQLNQPVTPTTVCSTAASFCRGLTDRELRTNNSQLTAGQRLYQQLGLTGARGEAEAGYPLVINHALPHYLTLLDQGLDPELALLDTLLLLMAINGDTNVASRGGEGGLRWLQREAQTLLQKGGIRTPADLDYLRQFDRECIERNLSPGGSADLLILTWFLAQI</sequence>
<name>CITG_ECOSE</name>
<evidence type="ECO:0000255" key="1">
    <source>
        <dbReference type="HAMAP-Rule" id="MF_00397"/>
    </source>
</evidence>
<gene>
    <name evidence="1" type="primary">citG</name>
    <name type="ordered locus">ECSE_0681</name>
</gene>
<feature type="chain" id="PRO_1000123223" description="2-(5''-triphosphoribosyl)-3'-dephosphocoenzyme-A synthase">
    <location>
        <begin position="1"/>
        <end position="292"/>
    </location>
</feature>
<accession>B6I0S2</accession>
<comment type="function">
    <text evidence="1">Catalyzes the formation of 2-(5''-triphosphoribosyl)-3'-dephosphocoenzyme-A, the precursor of the prosthetic group of the holo-acyl carrier protein (gamma chain) of citrate lyase, from ATP and dephospho-CoA.</text>
</comment>
<comment type="catalytic activity">
    <reaction evidence="1">
        <text>3'-dephospho-CoA + ATP = 2'-(5''-triphospho-alpha-D-ribosyl)-3'-dephospho-CoA + adenine</text>
        <dbReference type="Rhea" id="RHEA:15117"/>
        <dbReference type="ChEBI" id="CHEBI:16708"/>
        <dbReference type="ChEBI" id="CHEBI:30616"/>
        <dbReference type="ChEBI" id="CHEBI:57328"/>
        <dbReference type="ChEBI" id="CHEBI:61378"/>
        <dbReference type="EC" id="2.4.2.52"/>
    </reaction>
</comment>
<comment type="similarity">
    <text evidence="1">Belongs to the CitG/MdcB family.</text>
</comment>
<reference key="1">
    <citation type="journal article" date="2008" name="DNA Res.">
        <title>Complete genome sequence and comparative analysis of the wild-type commensal Escherichia coli strain SE11 isolated from a healthy adult.</title>
        <authorList>
            <person name="Oshima K."/>
            <person name="Toh H."/>
            <person name="Ogura Y."/>
            <person name="Sasamoto H."/>
            <person name="Morita H."/>
            <person name="Park S.-H."/>
            <person name="Ooka T."/>
            <person name="Iyoda S."/>
            <person name="Taylor T.D."/>
            <person name="Hayashi T."/>
            <person name="Itoh K."/>
            <person name="Hattori M."/>
        </authorList>
    </citation>
    <scope>NUCLEOTIDE SEQUENCE [LARGE SCALE GENOMIC DNA]</scope>
    <source>
        <strain>SE11</strain>
    </source>
</reference>
<protein>
    <recommendedName>
        <fullName evidence="1">2-(5''-triphosphoribosyl)-3'-dephosphocoenzyme-A synthase</fullName>
        <shortName evidence="1">2-(5''-triphosphoribosyl)-3'-dephospho-CoA synthase</shortName>
        <ecNumber evidence="1">2.4.2.52</ecNumber>
    </recommendedName>
</protein>
<organism>
    <name type="scientific">Escherichia coli (strain SE11)</name>
    <dbReference type="NCBI Taxonomy" id="409438"/>
    <lineage>
        <taxon>Bacteria</taxon>
        <taxon>Pseudomonadati</taxon>
        <taxon>Pseudomonadota</taxon>
        <taxon>Gammaproteobacteria</taxon>
        <taxon>Enterobacterales</taxon>
        <taxon>Enterobacteriaceae</taxon>
        <taxon>Escherichia</taxon>
    </lineage>
</organism>
<proteinExistence type="inferred from homology"/>
<dbReference type="EC" id="2.4.2.52" evidence="1"/>
<dbReference type="EMBL" id="AP009240">
    <property type="protein sequence ID" value="BAG76205.1"/>
    <property type="molecule type" value="Genomic_DNA"/>
</dbReference>
<dbReference type="RefSeq" id="WP_000062457.1">
    <property type="nucleotide sequence ID" value="NC_011415.1"/>
</dbReference>
<dbReference type="KEGG" id="ecy:ECSE_0681"/>
<dbReference type="HOGENOM" id="CLU_056179_1_0_6"/>
<dbReference type="Proteomes" id="UP000008199">
    <property type="component" value="Chromosome"/>
</dbReference>
<dbReference type="GO" id="GO:0005524">
    <property type="term" value="F:ATP binding"/>
    <property type="evidence" value="ECO:0007669"/>
    <property type="project" value="UniProtKB-KW"/>
</dbReference>
<dbReference type="GO" id="GO:0046917">
    <property type="term" value="F:triphosphoribosyl-dephospho-CoA synthase activity"/>
    <property type="evidence" value="ECO:0007669"/>
    <property type="project" value="UniProtKB-UniRule"/>
</dbReference>
<dbReference type="GO" id="GO:0051191">
    <property type="term" value="P:prosthetic group biosynthetic process"/>
    <property type="evidence" value="ECO:0007669"/>
    <property type="project" value="TreeGrafter"/>
</dbReference>
<dbReference type="FunFam" id="1.10.4200.10:FF:000001">
    <property type="entry name" value="Triphosphoribosyl-dephospho-CoA synthase CitG"/>
    <property type="match status" value="1"/>
</dbReference>
<dbReference type="Gene3D" id="1.10.4200.10">
    <property type="entry name" value="Triphosphoribosyl-dephospho-CoA protein"/>
    <property type="match status" value="1"/>
</dbReference>
<dbReference type="HAMAP" id="MF_00397">
    <property type="entry name" value="CitG"/>
    <property type="match status" value="1"/>
</dbReference>
<dbReference type="InterPro" id="IPR002736">
    <property type="entry name" value="CitG"/>
</dbReference>
<dbReference type="InterPro" id="IPR017551">
    <property type="entry name" value="TriPribosyl-deP-CoA_syn_CitG"/>
</dbReference>
<dbReference type="NCBIfam" id="TIGR03125">
    <property type="entry name" value="citrate_citG"/>
    <property type="match status" value="1"/>
</dbReference>
<dbReference type="NCBIfam" id="NF007503">
    <property type="entry name" value="PRK10096.1"/>
    <property type="match status" value="1"/>
</dbReference>
<dbReference type="PANTHER" id="PTHR30201:SF2">
    <property type="entry name" value="2-(5''-TRIPHOSPHORIBOSYL)-3'-DEPHOSPHOCOENZYME-A SYNTHASE"/>
    <property type="match status" value="1"/>
</dbReference>
<dbReference type="PANTHER" id="PTHR30201">
    <property type="entry name" value="TRIPHOSPHORIBOSYL-DEPHOSPHO-COA SYNTHASE"/>
    <property type="match status" value="1"/>
</dbReference>
<dbReference type="Pfam" id="PF01874">
    <property type="entry name" value="CitG"/>
    <property type="match status" value="1"/>
</dbReference>